<name>NDK_KLEP3</name>
<organism>
    <name type="scientific">Klebsiella pneumoniae (strain 342)</name>
    <dbReference type="NCBI Taxonomy" id="507522"/>
    <lineage>
        <taxon>Bacteria</taxon>
        <taxon>Pseudomonadati</taxon>
        <taxon>Pseudomonadota</taxon>
        <taxon>Gammaproteobacteria</taxon>
        <taxon>Enterobacterales</taxon>
        <taxon>Enterobacteriaceae</taxon>
        <taxon>Klebsiella/Raoultella group</taxon>
        <taxon>Klebsiella</taxon>
        <taxon>Klebsiella pneumoniae complex</taxon>
    </lineage>
</organism>
<sequence>MAIERTFSIIKPNAVAKNVIGSIFSRFEAAGFKIVGTKMLHLTVEQARGFYAEHEGRPFFDGLVEFMTSGPIVVSVLEGENAVQRHRDLLGATNPANALAGTLRADYADSFTENGTHGSDSVESAAREIAFFFAEGEVCPRTR</sequence>
<dbReference type="EC" id="2.7.4.6" evidence="1"/>
<dbReference type="EMBL" id="CP000964">
    <property type="protein sequence ID" value="ACI11693.1"/>
    <property type="molecule type" value="Genomic_DNA"/>
</dbReference>
<dbReference type="SMR" id="B5XNL1"/>
<dbReference type="KEGG" id="kpe:KPK_1271"/>
<dbReference type="HOGENOM" id="CLU_060216_8_1_6"/>
<dbReference type="Proteomes" id="UP000001734">
    <property type="component" value="Chromosome"/>
</dbReference>
<dbReference type="GO" id="GO:0005737">
    <property type="term" value="C:cytoplasm"/>
    <property type="evidence" value="ECO:0007669"/>
    <property type="project" value="UniProtKB-SubCell"/>
</dbReference>
<dbReference type="GO" id="GO:0005524">
    <property type="term" value="F:ATP binding"/>
    <property type="evidence" value="ECO:0007669"/>
    <property type="project" value="UniProtKB-UniRule"/>
</dbReference>
<dbReference type="GO" id="GO:0046872">
    <property type="term" value="F:metal ion binding"/>
    <property type="evidence" value="ECO:0007669"/>
    <property type="project" value="UniProtKB-KW"/>
</dbReference>
<dbReference type="GO" id="GO:0004550">
    <property type="term" value="F:nucleoside diphosphate kinase activity"/>
    <property type="evidence" value="ECO:0007669"/>
    <property type="project" value="UniProtKB-UniRule"/>
</dbReference>
<dbReference type="GO" id="GO:0006241">
    <property type="term" value="P:CTP biosynthetic process"/>
    <property type="evidence" value="ECO:0007669"/>
    <property type="project" value="UniProtKB-UniRule"/>
</dbReference>
<dbReference type="GO" id="GO:0006183">
    <property type="term" value="P:GTP biosynthetic process"/>
    <property type="evidence" value="ECO:0007669"/>
    <property type="project" value="UniProtKB-UniRule"/>
</dbReference>
<dbReference type="GO" id="GO:0006228">
    <property type="term" value="P:UTP biosynthetic process"/>
    <property type="evidence" value="ECO:0007669"/>
    <property type="project" value="UniProtKB-UniRule"/>
</dbReference>
<dbReference type="CDD" id="cd04413">
    <property type="entry name" value="NDPk_I"/>
    <property type="match status" value="1"/>
</dbReference>
<dbReference type="FunFam" id="3.30.70.141:FF:000001">
    <property type="entry name" value="Nucleoside diphosphate kinase"/>
    <property type="match status" value="1"/>
</dbReference>
<dbReference type="Gene3D" id="3.30.70.141">
    <property type="entry name" value="Nucleoside diphosphate kinase-like domain"/>
    <property type="match status" value="1"/>
</dbReference>
<dbReference type="HAMAP" id="MF_00451">
    <property type="entry name" value="NDP_kinase"/>
    <property type="match status" value="1"/>
</dbReference>
<dbReference type="InterPro" id="IPR034907">
    <property type="entry name" value="NDK-like_dom"/>
</dbReference>
<dbReference type="InterPro" id="IPR036850">
    <property type="entry name" value="NDK-like_dom_sf"/>
</dbReference>
<dbReference type="InterPro" id="IPR001564">
    <property type="entry name" value="Nucleoside_diP_kinase"/>
</dbReference>
<dbReference type="InterPro" id="IPR023005">
    <property type="entry name" value="Nucleoside_diP_kinase_AS"/>
</dbReference>
<dbReference type="NCBIfam" id="NF001908">
    <property type="entry name" value="PRK00668.1"/>
    <property type="match status" value="1"/>
</dbReference>
<dbReference type="PANTHER" id="PTHR46161">
    <property type="entry name" value="NUCLEOSIDE DIPHOSPHATE KINASE"/>
    <property type="match status" value="1"/>
</dbReference>
<dbReference type="PANTHER" id="PTHR46161:SF3">
    <property type="entry name" value="NUCLEOSIDE DIPHOSPHATE KINASE DDB_G0292928-RELATED"/>
    <property type="match status" value="1"/>
</dbReference>
<dbReference type="Pfam" id="PF00334">
    <property type="entry name" value="NDK"/>
    <property type="match status" value="1"/>
</dbReference>
<dbReference type="PRINTS" id="PR01243">
    <property type="entry name" value="NUCDPKINASE"/>
</dbReference>
<dbReference type="SMART" id="SM00562">
    <property type="entry name" value="NDK"/>
    <property type="match status" value="1"/>
</dbReference>
<dbReference type="SUPFAM" id="SSF54919">
    <property type="entry name" value="Nucleoside diphosphate kinase, NDK"/>
    <property type="match status" value="1"/>
</dbReference>
<dbReference type="PROSITE" id="PS00469">
    <property type="entry name" value="NDPK"/>
    <property type="match status" value="1"/>
</dbReference>
<dbReference type="PROSITE" id="PS51374">
    <property type="entry name" value="NDPK_LIKE"/>
    <property type="match status" value="1"/>
</dbReference>
<keyword id="KW-0067">ATP-binding</keyword>
<keyword id="KW-0963">Cytoplasm</keyword>
<keyword id="KW-0418">Kinase</keyword>
<keyword id="KW-0460">Magnesium</keyword>
<keyword id="KW-0479">Metal-binding</keyword>
<keyword id="KW-0546">Nucleotide metabolism</keyword>
<keyword id="KW-0547">Nucleotide-binding</keyword>
<keyword id="KW-0597">Phosphoprotein</keyword>
<keyword id="KW-0808">Transferase</keyword>
<evidence type="ECO:0000255" key="1">
    <source>
        <dbReference type="HAMAP-Rule" id="MF_00451"/>
    </source>
</evidence>
<feature type="chain" id="PRO_1000192265" description="Nucleoside diphosphate kinase">
    <location>
        <begin position="1"/>
        <end position="143"/>
    </location>
</feature>
<feature type="active site" description="Pros-phosphohistidine intermediate" evidence="1">
    <location>
        <position position="117"/>
    </location>
</feature>
<feature type="binding site" evidence="1">
    <location>
        <position position="11"/>
    </location>
    <ligand>
        <name>ATP</name>
        <dbReference type="ChEBI" id="CHEBI:30616"/>
    </ligand>
</feature>
<feature type="binding site" evidence="1">
    <location>
        <position position="59"/>
    </location>
    <ligand>
        <name>ATP</name>
        <dbReference type="ChEBI" id="CHEBI:30616"/>
    </ligand>
</feature>
<feature type="binding site" evidence="1">
    <location>
        <position position="87"/>
    </location>
    <ligand>
        <name>ATP</name>
        <dbReference type="ChEBI" id="CHEBI:30616"/>
    </ligand>
</feature>
<feature type="binding site" evidence="1">
    <location>
        <position position="93"/>
    </location>
    <ligand>
        <name>ATP</name>
        <dbReference type="ChEBI" id="CHEBI:30616"/>
    </ligand>
</feature>
<feature type="binding site" evidence="1">
    <location>
        <position position="104"/>
    </location>
    <ligand>
        <name>ATP</name>
        <dbReference type="ChEBI" id="CHEBI:30616"/>
    </ligand>
</feature>
<feature type="binding site" evidence="1">
    <location>
        <position position="114"/>
    </location>
    <ligand>
        <name>ATP</name>
        <dbReference type="ChEBI" id="CHEBI:30616"/>
    </ligand>
</feature>
<gene>
    <name evidence="1" type="primary">ndk</name>
    <name type="ordered locus">KPK_1271</name>
</gene>
<comment type="function">
    <text evidence="1">Major role in the synthesis of nucleoside triphosphates other than ATP. The ATP gamma phosphate is transferred to the NDP beta phosphate via a ping-pong mechanism, using a phosphorylated active-site intermediate.</text>
</comment>
<comment type="catalytic activity">
    <reaction evidence="1">
        <text>a 2'-deoxyribonucleoside 5'-diphosphate + ATP = a 2'-deoxyribonucleoside 5'-triphosphate + ADP</text>
        <dbReference type="Rhea" id="RHEA:44640"/>
        <dbReference type="ChEBI" id="CHEBI:30616"/>
        <dbReference type="ChEBI" id="CHEBI:61560"/>
        <dbReference type="ChEBI" id="CHEBI:73316"/>
        <dbReference type="ChEBI" id="CHEBI:456216"/>
        <dbReference type="EC" id="2.7.4.6"/>
    </reaction>
</comment>
<comment type="catalytic activity">
    <reaction evidence="1">
        <text>a ribonucleoside 5'-diphosphate + ATP = a ribonucleoside 5'-triphosphate + ADP</text>
        <dbReference type="Rhea" id="RHEA:18113"/>
        <dbReference type="ChEBI" id="CHEBI:30616"/>
        <dbReference type="ChEBI" id="CHEBI:57930"/>
        <dbReference type="ChEBI" id="CHEBI:61557"/>
        <dbReference type="ChEBI" id="CHEBI:456216"/>
        <dbReference type="EC" id="2.7.4.6"/>
    </reaction>
</comment>
<comment type="cofactor">
    <cofactor evidence="1">
        <name>Mg(2+)</name>
        <dbReference type="ChEBI" id="CHEBI:18420"/>
    </cofactor>
</comment>
<comment type="subunit">
    <text evidence="1">Homotetramer.</text>
</comment>
<comment type="subcellular location">
    <subcellularLocation>
        <location evidence="1">Cytoplasm</location>
    </subcellularLocation>
</comment>
<comment type="similarity">
    <text evidence="1">Belongs to the NDK family.</text>
</comment>
<accession>B5XNL1</accession>
<proteinExistence type="inferred from homology"/>
<reference key="1">
    <citation type="journal article" date="2008" name="PLoS Genet.">
        <title>Complete genome sequence of the N2-fixing broad host range endophyte Klebsiella pneumoniae 342 and virulence predictions verified in mice.</title>
        <authorList>
            <person name="Fouts D.E."/>
            <person name="Tyler H.L."/>
            <person name="DeBoy R.T."/>
            <person name="Daugherty S."/>
            <person name="Ren Q."/>
            <person name="Badger J.H."/>
            <person name="Durkin A.S."/>
            <person name="Huot H."/>
            <person name="Shrivastava S."/>
            <person name="Kothari S."/>
            <person name="Dodson R.J."/>
            <person name="Mohamoud Y."/>
            <person name="Khouri H."/>
            <person name="Roesch L.F.W."/>
            <person name="Krogfelt K.A."/>
            <person name="Struve C."/>
            <person name="Triplett E.W."/>
            <person name="Methe B.A."/>
        </authorList>
    </citation>
    <scope>NUCLEOTIDE SEQUENCE [LARGE SCALE GENOMIC DNA]</scope>
    <source>
        <strain>342</strain>
    </source>
</reference>
<protein>
    <recommendedName>
        <fullName evidence="1">Nucleoside diphosphate kinase</fullName>
        <shortName evidence="1">NDK</shortName>
        <shortName evidence="1">NDP kinase</shortName>
        <ecNumber evidence="1">2.7.4.6</ecNumber>
    </recommendedName>
    <alternativeName>
        <fullName evidence="1">Nucleoside-2-P kinase</fullName>
    </alternativeName>
</protein>